<accession>A6L075</accession>
<gene>
    <name evidence="1" type="primary">murE</name>
    <name type="ordered locus">BVU_1401</name>
</gene>
<organism>
    <name type="scientific">Phocaeicola vulgatus (strain ATCC 8482 / DSM 1447 / JCM 5826 / CCUG 4940 / NBRC 14291 / NCTC 11154)</name>
    <name type="common">Bacteroides vulgatus</name>
    <dbReference type="NCBI Taxonomy" id="435590"/>
    <lineage>
        <taxon>Bacteria</taxon>
        <taxon>Pseudomonadati</taxon>
        <taxon>Bacteroidota</taxon>
        <taxon>Bacteroidia</taxon>
        <taxon>Bacteroidales</taxon>
        <taxon>Bacteroidaceae</taxon>
        <taxon>Phocaeicola</taxon>
    </lineage>
</organism>
<protein>
    <recommendedName>
        <fullName evidence="1">UDP-N-acetylmuramoyl-L-alanyl-D-glutamate--2,6-diaminopimelate ligase</fullName>
        <ecNumber evidence="1">6.3.2.13</ecNumber>
    </recommendedName>
    <alternativeName>
        <fullName evidence="1">Meso-A2pm-adding enzyme</fullName>
    </alternativeName>
    <alternativeName>
        <fullName evidence="1">Meso-diaminopimelate-adding enzyme</fullName>
    </alternativeName>
    <alternativeName>
        <fullName evidence="1">UDP-MurNAc-L-Ala-D-Glu:meso-diaminopimelate ligase</fullName>
    </alternativeName>
    <alternativeName>
        <fullName evidence="1">UDP-MurNAc-tripeptide synthetase</fullName>
    </alternativeName>
    <alternativeName>
        <fullName evidence="1">UDP-N-acetylmuramyl-tripeptide synthetase</fullName>
    </alternativeName>
</protein>
<keyword id="KW-0067">ATP-binding</keyword>
<keyword id="KW-0131">Cell cycle</keyword>
<keyword id="KW-0132">Cell division</keyword>
<keyword id="KW-0133">Cell shape</keyword>
<keyword id="KW-0961">Cell wall biogenesis/degradation</keyword>
<keyword id="KW-0963">Cytoplasm</keyword>
<keyword id="KW-0436">Ligase</keyword>
<keyword id="KW-0460">Magnesium</keyword>
<keyword id="KW-0547">Nucleotide-binding</keyword>
<keyword id="KW-0573">Peptidoglycan synthesis</keyword>
<sequence length="484" mass="53283">MKLEKIIKGITVNEIIGDASQEISGINMDSRLIEPGHIFVAVKGTQTDGHTYIQKAIEKGARTVVCENLPETLIENVTYIKVNDTEDVVGKLATTFYGDPTSKLELVGVTGTNGKTTIATLLYNMFRKFGYKTGLISTVCNYIDEEAIPTDHTTPDPITLNKLLGRMADEGCKYAFMEVSSHSVAQKRIGGLKFAGGIFTNLTRDHLDYHKTVENYLKAKKAFFDGLPKTAFALTNLDDKNGLVMTQNTKAKVHTYSLRSLSDFKGKVLEDGFEGMLLDINNVEVNVQFIGRFNASNLLAVYGAACLLGKKTEEVLLALSTLRPVAGRFDSLRSPKGYTAIVDYAHTPDALENVLNAIHEVLNGKGHVITVVGAGGNRDKGKRPLMAQEAVKQSDKVIITSDNPRFEEPQEIINDMLAGLTKEDMRKVISIADRKEAIRTACMLAQAKDVILVAGKGHENYQEIKGIKHHFDDKEVLRDIFANE</sequence>
<reference key="1">
    <citation type="journal article" date="2007" name="PLoS Biol.">
        <title>Evolution of symbiotic bacteria in the distal human intestine.</title>
        <authorList>
            <person name="Xu J."/>
            <person name="Mahowald M.A."/>
            <person name="Ley R.E."/>
            <person name="Lozupone C.A."/>
            <person name="Hamady M."/>
            <person name="Martens E.C."/>
            <person name="Henrissat B."/>
            <person name="Coutinho P.M."/>
            <person name="Minx P."/>
            <person name="Latreille P."/>
            <person name="Cordum H."/>
            <person name="Van Brunt A."/>
            <person name="Kim K."/>
            <person name="Fulton R.S."/>
            <person name="Fulton L.A."/>
            <person name="Clifton S.W."/>
            <person name="Wilson R.K."/>
            <person name="Knight R.D."/>
            <person name="Gordon J.I."/>
        </authorList>
    </citation>
    <scope>NUCLEOTIDE SEQUENCE [LARGE SCALE GENOMIC DNA]</scope>
    <source>
        <strain>ATCC 8482 / DSM 1447 / JCM 5826 / CCUG 4940 / NBRC 14291 / NCTC 11154</strain>
    </source>
</reference>
<dbReference type="EC" id="6.3.2.13" evidence="1"/>
<dbReference type="EMBL" id="CP000139">
    <property type="protein sequence ID" value="ABR39089.1"/>
    <property type="molecule type" value="Genomic_DNA"/>
</dbReference>
<dbReference type="RefSeq" id="WP_005845321.1">
    <property type="nucleotide sequence ID" value="NZ_JANSWM010000067.1"/>
</dbReference>
<dbReference type="SMR" id="A6L075"/>
<dbReference type="STRING" id="435590.BVU_1401"/>
<dbReference type="PaxDb" id="435590-BVU_1401"/>
<dbReference type="GeneID" id="5302367"/>
<dbReference type="KEGG" id="bvu:BVU_1401"/>
<dbReference type="eggNOG" id="COG0769">
    <property type="taxonomic scope" value="Bacteria"/>
</dbReference>
<dbReference type="HOGENOM" id="CLU_022291_4_1_10"/>
<dbReference type="BioCyc" id="BVUL435590:G1G59-1464-MONOMER"/>
<dbReference type="UniPathway" id="UPA00219"/>
<dbReference type="Proteomes" id="UP000002861">
    <property type="component" value="Chromosome"/>
</dbReference>
<dbReference type="GO" id="GO:0005737">
    <property type="term" value="C:cytoplasm"/>
    <property type="evidence" value="ECO:0007669"/>
    <property type="project" value="UniProtKB-SubCell"/>
</dbReference>
<dbReference type="GO" id="GO:0005524">
    <property type="term" value="F:ATP binding"/>
    <property type="evidence" value="ECO:0007669"/>
    <property type="project" value="UniProtKB-UniRule"/>
</dbReference>
<dbReference type="GO" id="GO:0000287">
    <property type="term" value="F:magnesium ion binding"/>
    <property type="evidence" value="ECO:0007669"/>
    <property type="project" value="UniProtKB-UniRule"/>
</dbReference>
<dbReference type="GO" id="GO:0008765">
    <property type="term" value="F:UDP-N-acetylmuramoylalanyl-D-glutamate-2,6-diaminopimelate ligase activity"/>
    <property type="evidence" value="ECO:0007669"/>
    <property type="project" value="UniProtKB-UniRule"/>
</dbReference>
<dbReference type="GO" id="GO:0051301">
    <property type="term" value="P:cell division"/>
    <property type="evidence" value="ECO:0007669"/>
    <property type="project" value="UniProtKB-KW"/>
</dbReference>
<dbReference type="GO" id="GO:0071555">
    <property type="term" value="P:cell wall organization"/>
    <property type="evidence" value="ECO:0007669"/>
    <property type="project" value="UniProtKB-KW"/>
</dbReference>
<dbReference type="GO" id="GO:0009252">
    <property type="term" value="P:peptidoglycan biosynthetic process"/>
    <property type="evidence" value="ECO:0007669"/>
    <property type="project" value="UniProtKB-UniRule"/>
</dbReference>
<dbReference type="GO" id="GO:0008360">
    <property type="term" value="P:regulation of cell shape"/>
    <property type="evidence" value="ECO:0007669"/>
    <property type="project" value="UniProtKB-KW"/>
</dbReference>
<dbReference type="Gene3D" id="3.90.190.20">
    <property type="entry name" value="Mur ligase, C-terminal domain"/>
    <property type="match status" value="1"/>
</dbReference>
<dbReference type="Gene3D" id="3.40.1190.10">
    <property type="entry name" value="Mur-like, catalytic domain"/>
    <property type="match status" value="1"/>
</dbReference>
<dbReference type="Gene3D" id="3.40.1390.10">
    <property type="entry name" value="MurE/MurF, N-terminal domain"/>
    <property type="match status" value="1"/>
</dbReference>
<dbReference type="HAMAP" id="MF_00208">
    <property type="entry name" value="MurE"/>
    <property type="match status" value="1"/>
</dbReference>
<dbReference type="InterPro" id="IPR036565">
    <property type="entry name" value="Mur-like_cat_sf"/>
</dbReference>
<dbReference type="InterPro" id="IPR004101">
    <property type="entry name" value="Mur_ligase_C"/>
</dbReference>
<dbReference type="InterPro" id="IPR036615">
    <property type="entry name" value="Mur_ligase_C_dom_sf"/>
</dbReference>
<dbReference type="InterPro" id="IPR013221">
    <property type="entry name" value="Mur_ligase_cen"/>
</dbReference>
<dbReference type="InterPro" id="IPR000713">
    <property type="entry name" value="Mur_ligase_N"/>
</dbReference>
<dbReference type="InterPro" id="IPR035911">
    <property type="entry name" value="MurE/MurF_N"/>
</dbReference>
<dbReference type="InterPro" id="IPR005761">
    <property type="entry name" value="UDP-N-AcMur-Glu-dNH2Pim_ligase"/>
</dbReference>
<dbReference type="NCBIfam" id="TIGR01085">
    <property type="entry name" value="murE"/>
    <property type="match status" value="1"/>
</dbReference>
<dbReference type="NCBIfam" id="NF001126">
    <property type="entry name" value="PRK00139.1-4"/>
    <property type="match status" value="1"/>
</dbReference>
<dbReference type="PANTHER" id="PTHR23135">
    <property type="entry name" value="MUR LIGASE FAMILY MEMBER"/>
    <property type="match status" value="1"/>
</dbReference>
<dbReference type="PANTHER" id="PTHR23135:SF4">
    <property type="entry name" value="UDP-N-ACETYLMURAMOYL-L-ALANYL-D-GLUTAMATE--2,6-DIAMINOPIMELATE LIGASE MURE HOMOLOG, CHLOROPLASTIC"/>
    <property type="match status" value="1"/>
</dbReference>
<dbReference type="Pfam" id="PF01225">
    <property type="entry name" value="Mur_ligase"/>
    <property type="match status" value="1"/>
</dbReference>
<dbReference type="Pfam" id="PF02875">
    <property type="entry name" value="Mur_ligase_C"/>
    <property type="match status" value="1"/>
</dbReference>
<dbReference type="Pfam" id="PF08245">
    <property type="entry name" value="Mur_ligase_M"/>
    <property type="match status" value="1"/>
</dbReference>
<dbReference type="SUPFAM" id="SSF53623">
    <property type="entry name" value="MurD-like peptide ligases, catalytic domain"/>
    <property type="match status" value="1"/>
</dbReference>
<dbReference type="SUPFAM" id="SSF53244">
    <property type="entry name" value="MurD-like peptide ligases, peptide-binding domain"/>
    <property type="match status" value="1"/>
</dbReference>
<dbReference type="SUPFAM" id="SSF63418">
    <property type="entry name" value="MurE/MurF N-terminal domain"/>
    <property type="match status" value="1"/>
</dbReference>
<evidence type="ECO:0000255" key="1">
    <source>
        <dbReference type="HAMAP-Rule" id="MF_00208"/>
    </source>
</evidence>
<comment type="function">
    <text evidence="1">Catalyzes the addition of meso-diaminopimelic acid to the nucleotide precursor UDP-N-acetylmuramoyl-L-alanyl-D-glutamate (UMAG) in the biosynthesis of bacterial cell-wall peptidoglycan.</text>
</comment>
<comment type="catalytic activity">
    <reaction evidence="1">
        <text>UDP-N-acetyl-alpha-D-muramoyl-L-alanyl-D-glutamate + meso-2,6-diaminopimelate + ATP = UDP-N-acetyl-alpha-D-muramoyl-L-alanyl-gamma-D-glutamyl-meso-2,6-diaminopimelate + ADP + phosphate + H(+)</text>
        <dbReference type="Rhea" id="RHEA:23676"/>
        <dbReference type="ChEBI" id="CHEBI:15378"/>
        <dbReference type="ChEBI" id="CHEBI:30616"/>
        <dbReference type="ChEBI" id="CHEBI:43474"/>
        <dbReference type="ChEBI" id="CHEBI:57791"/>
        <dbReference type="ChEBI" id="CHEBI:83900"/>
        <dbReference type="ChEBI" id="CHEBI:83905"/>
        <dbReference type="ChEBI" id="CHEBI:456216"/>
        <dbReference type="EC" id="6.3.2.13"/>
    </reaction>
</comment>
<comment type="cofactor">
    <cofactor evidence="1">
        <name>Mg(2+)</name>
        <dbReference type="ChEBI" id="CHEBI:18420"/>
    </cofactor>
</comment>
<comment type="pathway">
    <text evidence="1">Cell wall biogenesis; peptidoglycan biosynthesis.</text>
</comment>
<comment type="subcellular location">
    <subcellularLocation>
        <location evidence="1">Cytoplasm</location>
    </subcellularLocation>
</comment>
<comment type="PTM">
    <text evidence="1">Carboxylation is probably crucial for Mg(2+) binding and, consequently, for the gamma-phosphate positioning of ATP.</text>
</comment>
<comment type="similarity">
    <text evidence="1">Belongs to the MurCDEF family. MurE subfamily.</text>
</comment>
<feature type="chain" id="PRO_1000012340" description="UDP-N-acetylmuramoyl-L-alanyl-D-glutamate--2,6-diaminopimelate ligase">
    <location>
        <begin position="1"/>
        <end position="484"/>
    </location>
</feature>
<feature type="short sequence motif" description="Meso-diaminopimelate recognition motif">
    <location>
        <begin position="402"/>
        <end position="405"/>
    </location>
</feature>
<feature type="binding site" evidence="1">
    <location>
        <position position="30"/>
    </location>
    <ligand>
        <name>UDP-N-acetyl-alpha-D-muramoyl-L-alanyl-D-glutamate</name>
        <dbReference type="ChEBI" id="CHEBI:83900"/>
    </ligand>
</feature>
<feature type="binding site" evidence="1">
    <location>
        <begin position="111"/>
        <end position="117"/>
    </location>
    <ligand>
        <name>ATP</name>
        <dbReference type="ChEBI" id="CHEBI:30616"/>
    </ligand>
</feature>
<feature type="binding site" evidence="1">
    <location>
        <begin position="153"/>
        <end position="154"/>
    </location>
    <ligand>
        <name>UDP-N-acetyl-alpha-D-muramoyl-L-alanyl-D-glutamate</name>
        <dbReference type="ChEBI" id="CHEBI:83900"/>
    </ligand>
</feature>
<feature type="binding site" evidence="1">
    <location>
        <position position="180"/>
    </location>
    <ligand>
        <name>UDP-N-acetyl-alpha-D-muramoyl-L-alanyl-D-glutamate</name>
        <dbReference type="ChEBI" id="CHEBI:83900"/>
    </ligand>
</feature>
<feature type="binding site" evidence="1">
    <location>
        <position position="186"/>
    </location>
    <ligand>
        <name>UDP-N-acetyl-alpha-D-muramoyl-L-alanyl-D-glutamate</name>
        <dbReference type="ChEBI" id="CHEBI:83900"/>
    </ligand>
</feature>
<feature type="binding site" evidence="1">
    <location>
        <position position="188"/>
    </location>
    <ligand>
        <name>UDP-N-acetyl-alpha-D-muramoyl-L-alanyl-D-glutamate</name>
        <dbReference type="ChEBI" id="CHEBI:83900"/>
    </ligand>
</feature>
<feature type="binding site" evidence="1">
    <location>
        <position position="378"/>
    </location>
    <ligand>
        <name>meso-2,6-diaminopimelate</name>
        <dbReference type="ChEBI" id="CHEBI:57791"/>
    </ligand>
</feature>
<feature type="binding site" evidence="1">
    <location>
        <begin position="402"/>
        <end position="405"/>
    </location>
    <ligand>
        <name>meso-2,6-diaminopimelate</name>
        <dbReference type="ChEBI" id="CHEBI:57791"/>
    </ligand>
</feature>
<feature type="binding site" evidence="1">
    <location>
        <position position="455"/>
    </location>
    <ligand>
        <name>meso-2,6-diaminopimelate</name>
        <dbReference type="ChEBI" id="CHEBI:57791"/>
    </ligand>
</feature>
<feature type="binding site" evidence="1">
    <location>
        <position position="459"/>
    </location>
    <ligand>
        <name>meso-2,6-diaminopimelate</name>
        <dbReference type="ChEBI" id="CHEBI:57791"/>
    </ligand>
</feature>
<feature type="modified residue" description="N6-carboxylysine" evidence="1">
    <location>
        <position position="220"/>
    </location>
</feature>
<name>MURE_PHOV8</name>
<proteinExistence type="inferred from homology"/>